<evidence type="ECO:0000269" key="1">
    <source>
    </source>
</evidence>
<evidence type="ECO:0000305" key="2"/>
<accession>P69017</accession>
<accession>P82388</accession>
<keyword id="KW-0027">Amidation</keyword>
<keyword id="KW-0878">Amphibian defense peptide</keyword>
<keyword id="KW-0044">Antibiotic</keyword>
<keyword id="KW-0929">Antimicrobial</keyword>
<keyword id="KW-0903">Direct protein sequencing</keyword>
<keyword id="KW-0964">Secreted</keyword>
<sequence length="16" mass="1616">GLLDIVKKVVGAFGSL</sequence>
<reference key="1">
    <citation type="journal article" date="2000" name="Eur. J. Biochem.">
        <title>The antibiotic and anticancer active aurein peptides from the australian bell frogs Litoria aurea and Litoria raniformis the solution structure of aurein 1.2.</title>
        <authorList>
            <person name="Rozek T."/>
            <person name="Wegener K.L."/>
            <person name="Bowie J.H."/>
            <person name="Olver I.N."/>
            <person name="Carver J.A."/>
            <person name="Wallace J.C."/>
            <person name="Tyler M.J."/>
        </authorList>
    </citation>
    <scope>PROTEIN SEQUENCE</scope>
    <scope>AMIDATION AT LEU-16</scope>
    <scope>FUNCTION</scope>
    <source>
        <tissue>Skin secretion</tissue>
    </source>
</reference>
<proteinExistence type="evidence at protein level"/>
<comment type="function">
    <text evidence="1">Has antimicrobial activity against B.cereus, L.lactis, L.innocua, M.luteus, S.epidermidis and S.uberis. Probably acts by disturbing membrane functions with its amphipathic structure.</text>
</comment>
<comment type="subcellular location">
    <subcellularLocation>
        <location>Secreted</location>
    </subcellularLocation>
</comment>
<comment type="tissue specificity">
    <text>Expressed by the skin glands.</text>
</comment>
<comment type="similarity">
    <text evidence="2">Belongs to the frog skin active peptide (FSAP) family. Aurein subfamily.</text>
</comment>
<protein>
    <recommendedName>
        <fullName>Aurein-2.1</fullName>
    </recommendedName>
    <component>
        <recommendedName>
            <fullName>Aurein-2.1.1</fullName>
        </recommendedName>
    </component>
</protein>
<dbReference type="GO" id="GO:0005576">
    <property type="term" value="C:extracellular region"/>
    <property type="evidence" value="ECO:0007669"/>
    <property type="project" value="UniProtKB-SubCell"/>
</dbReference>
<dbReference type="GO" id="GO:0042742">
    <property type="term" value="P:defense response to bacterium"/>
    <property type="evidence" value="ECO:0007669"/>
    <property type="project" value="UniProtKB-KW"/>
</dbReference>
<organism>
    <name type="scientific">Ranoidea aurea</name>
    <name type="common">Green and golden bell frog</name>
    <name type="synonym">Litoria aurea</name>
    <dbReference type="NCBI Taxonomy" id="8371"/>
    <lineage>
        <taxon>Eukaryota</taxon>
        <taxon>Metazoa</taxon>
        <taxon>Chordata</taxon>
        <taxon>Craniata</taxon>
        <taxon>Vertebrata</taxon>
        <taxon>Euteleostomi</taxon>
        <taxon>Amphibia</taxon>
        <taxon>Batrachia</taxon>
        <taxon>Anura</taxon>
        <taxon>Neobatrachia</taxon>
        <taxon>Hyloidea</taxon>
        <taxon>Hylidae</taxon>
        <taxon>Pelodryadinae</taxon>
        <taxon>Ranoidea</taxon>
    </lineage>
</organism>
<name>AUR21_RANAE</name>
<feature type="peptide" id="PRO_0000010145" description="Aurein-2.1">
    <location>
        <begin position="1"/>
        <end position="16"/>
    </location>
</feature>
<feature type="peptide" id="PRO_0000010146" description="Aurein-2.1.1">
    <location>
        <begin position="3"/>
        <end position="16"/>
    </location>
</feature>
<feature type="modified residue" description="Leucine amide" evidence="1">
    <location>
        <position position="16"/>
    </location>
</feature>